<feature type="chain" id="PRO_0000371167" description="ATP synthase subunit delta">
    <location>
        <begin position="1"/>
        <end position="178"/>
    </location>
</feature>
<comment type="function">
    <text evidence="1">F(1)F(0) ATP synthase produces ATP from ADP in the presence of a proton or sodium gradient. F-type ATPases consist of two structural domains, F(1) containing the extramembraneous catalytic core and F(0) containing the membrane proton channel, linked together by a central stalk and a peripheral stalk. During catalysis, ATP synthesis in the catalytic domain of F(1) is coupled via a rotary mechanism of the central stalk subunits to proton translocation.</text>
</comment>
<comment type="function">
    <text evidence="1">This protein is part of the stalk that links CF(0) to CF(1). It either transmits conformational changes from CF(0) to CF(1) or is implicated in proton conduction.</text>
</comment>
<comment type="subunit">
    <text evidence="1">F-type ATPases have 2 components, F(1) - the catalytic core - and F(0) - the membrane proton channel. F(1) has five subunits: alpha(3), beta(3), gamma(1), delta(1), epsilon(1). F(0) has three main subunits: a(1), b(2) and c(10-14). The alpha and beta chains form an alternating ring which encloses part of the gamma chain. F(1) is attached to F(0) by a central stalk formed by the gamma and epsilon chains, while a peripheral stalk is formed by the delta and b chains.</text>
</comment>
<comment type="subcellular location">
    <subcellularLocation>
        <location evidence="1">Cell membrane</location>
        <topology evidence="1">Peripheral membrane protein</topology>
    </subcellularLocation>
</comment>
<comment type="similarity">
    <text evidence="1">Belongs to the ATPase delta chain family.</text>
</comment>
<gene>
    <name evidence="1" type="primary">atpH</name>
    <name type="ordered locus">stu0481</name>
</gene>
<reference key="1">
    <citation type="journal article" date="2004" name="Nat. Biotechnol.">
        <title>Complete sequence and comparative genome analysis of the dairy bacterium Streptococcus thermophilus.</title>
        <authorList>
            <person name="Bolotin A."/>
            <person name="Quinquis B."/>
            <person name="Renault P."/>
            <person name="Sorokin A."/>
            <person name="Ehrlich S.D."/>
            <person name="Kulakauskas S."/>
            <person name="Lapidus A."/>
            <person name="Goltsman E."/>
            <person name="Mazur M."/>
            <person name="Pusch G.D."/>
            <person name="Fonstein M."/>
            <person name="Overbeek R."/>
            <person name="Kyprides N."/>
            <person name="Purnelle B."/>
            <person name="Prozzi D."/>
            <person name="Ngui K."/>
            <person name="Masuy D."/>
            <person name="Hancy F."/>
            <person name="Burteau S."/>
            <person name="Boutry M."/>
            <person name="Delcour J."/>
            <person name="Goffeau A."/>
            <person name="Hols P."/>
        </authorList>
    </citation>
    <scope>NUCLEOTIDE SEQUENCE [LARGE SCALE GENOMIC DNA]</scope>
    <source>
        <strain>ATCC BAA-250 / LMG 18311</strain>
    </source>
</reference>
<accession>Q5M5J4</accession>
<organism>
    <name type="scientific">Streptococcus thermophilus (strain ATCC BAA-250 / LMG 18311)</name>
    <dbReference type="NCBI Taxonomy" id="264199"/>
    <lineage>
        <taxon>Bacteria</taxon>
        <taxon>Bacillati</taxon>
        <taxon>Bacillota</taxon>
        <taxon>Bacilli</taxon>
        <taxon>Lactobacillales</taxon>
        <taxon>Streptococcaceae</taxon>
        <taxon>Streptococcus</taxon>
    </lineage>
</organism>
<dbReference type="EMBL" id="CP000023">
    <property type="protein sequence ID" value="AAV60191.1"/>
    <property type="molecule type" value="Genomic_DNA"/>
</dbReference>
<dbReference type="RefSeq" id="WP_011225595.1">
    <property type="nucleotide sequence ID" value="NC_006448.1"/>
</dbReference>
<dbReference type="SMR" id="Q5M5J4"/>
<dbReference type="STRING" id="264199.stu0481"/>
<dbReference type="KEGG" id="stl:stu0481"/>
<dbReference type="eggNOG" id="COG0712">
    <property type="taxonomic scope" value="Bacteria"/>
</dbReference>
<dbReference type="HOGENOM" id="CLU_085114_1_2_9"/>
<dbReference type="Proteomes" id="UP000001170">
    <property type="component" value="Chromosome"/>
</dbReference>
<dbReference type="GO" id="GO:0005886">
    <property type="term" value="C:plasma membrane"/>
    <property type="evidence" value="ECO:0007669"/>
    <property type="project" value="UniProtKB-SubCell"/>
</dbReference>
<dbReference type="GO" id="GO:0045259">
    <property type="term" value="C:proton-transporting ATP synthase complex"/>
    <property type="evidence" value="ECO:0007669"/>
    <property type="project" value="UniProtKB-KW"/>
</dbReference>
<dbReference type="GO" id="GO:0046933">
    <property type="term" value="F:proton-transporting ATP synthase activity, rotational mechanism"/>
    <property type="evidence" value="ECO:0007669"/>
    <property type="project" value="UniProtKB-UniRule"/>
</dbReference>
<dbReference type="Gene3D" id="1.10.520.20">
    <property type="entry name" value="N-terminal domain of the delta subunit of the F1F0-ATP synthase"/>
    <property type="match status" value="1"/>
</dbReference>
<dbReference type="HAMAP" id="MF_01416">
    <property type="entry name" value="ATP_synth_delta_bact"/>
    <property type="match status" value="1"/>
</dbReference>
<dbReference type="InterPro" id="IPR026015">
    <property type="entry name" value="ATP_synth_OSCP/delta_N_sf"/>
</dbReference>
<dbReference type="InterPro" id="IPR000711">
    <property type="entry name" value="ATPase_OSCP/dsu"/>
</dbReference>
<dbReference type="NCBIfam" id="TIGR01145">
    <property type="entry name" value="ATP_synt_delta"/>
    <property type="match status" value="1"/>
</dbReference>
<dbReference type="NCBIfam" id="NF004401">
    <property type="entry name" value="PRK05758.2-1"/>
    <property type="match status" value="1"/>
</dbReference>
<dbReference type="PANTHER" id="PTHR11910">
    <property type="entry name" value="ATP SYNTHASE DELTA CHAIN"/>
    <property type="match status" value="1"/>
</dbReference>
<dbReference type="Pfam" id="PF00213">
    <property type="entry name" value="OSCP"/>
    <property type="match status" value="1"/>
</dbReference>
<dbReference type="PRINTS" id="PR00125">
    <property type="entry name" value="ATPASEDELTA"/>
</dbReference>
<dbReference type="SUPFAM" id="SSF47928">
    <property type="entry name" value="N-terminal domain of the delta subunit of the F1F0-ATP synthase"/>
    <property type="match status" value="1"/>
</dbReference>
<evidence type="ECO:0000255" key="1">
    <source>
        <dbReference type="HAMAP-Rule" id="MF_01416"/>
    </source>
</evidence>
<keyword id="KW-0066">ATP synthesis</keyword>
<keyword id="KW-1003">Cell membrane</keyword>
<keyword id="KW-0139">CF(1)</keyword>
<keyword id="KW-0375">Hydrogen ion transport</keyword>
<keyword id="KW-0406">Ion transport</keyword>
<keyword id="KW-0472">Membrane</keyword>
<keyword id="KW-1185">Reference proteome</keyword>
<keyword id="KW-0813">Transport</keyword>
<protein>
    <recommendedName>
        <fullName evidence="1">ATP synthase subunit delta</fullName>
    </recommendedName>
    <alternativeName>
        <fullName evidence="1">ATP synthase F(1) sector subunit delta</fullName>
    </alternativeName>
    <alternativeName>
        <fullName evidence="1">F-type ATPase subunit delta</fullName>
        <shortName evidence="1">F-ATPase subunit delta</shortName>
    </alternativeName>
</protein>
<sequence>MDKKTQALVEQYARSLVEVAFEQDAVSTIQEEVRQILTVFAETNLKTFLSQVNVTSEAKKESLSFFQESCSVYMNNFLEVISLNDRANILYDVLKLVLELFDQEDNTYDVTVTSASPLSEEQKTRLLTIVSQKFEIKTRRLVEKIDEELIGGFVIKAKNKFVDTSIRSQLQAFKMNLK</sequence>
<name>ATPD_STRT2</name>
<proteinExistence type="inferred from homology"/>